<gene>
    <name evidence="1" type="primary">ihfA</name>
    <name evidence="1" type="synonym">himA</name>
    <name type="ordered locus">SDY_1807</name>
</gene>
<proteinExistence type="inferred from homology"/>
<comment type="function">
    <text evidence="1">This protein is one of the two subunits of integration host factor, a specific DNA-binding protein that functions in genetic recombination as well as in transcriptional and translational control.</text>
</comment>
<comment type="subunit">
    <text evidence="1">Heterodimer of an alpha and a beta chain.</text>
</comment>
<comment type="similarity">
    <text evidence="1">Belongs to the bacterial histone-like protein family.</text>
</comment>
<protein>
    <recommendedName>
        <fullName evidence="1">Integration host factor subunit alpha</fullName>
        <shortName evidence="1">IHF-alpha</shortName>
    </recommendedName>
</protein>
<organism>
    <name type="scientific">Shigella dysenteriae serotype 1 (strain Sd197)</name>
    <dbReference type="NCBI Taxonomy" id="300267"/>
    <lineage>
        <taxon>Bacteria</taxon>
        <taxon>Pseudomonadati</taxon>
        <taxon>Pseudomonadota</taxon>
        <taxon>Gammaproteobacteria</taxon>
        <taxon>Enterobacterales</taxon>
        <taxon>Enterobacteriaceae</taxon>
        <taxon>Shigella</taxon>
    </lineage>
</organism>
<evidence type="ECO:0000255" key="1">
    <source>
        <dbReference type="HAMAP-Rule" id="MF_00380"/>
    </source>
</evidence>
<evidence type="ECO:0000256" key="2">
    <source>
        <dbReference type="SAM" id="MobiDB-lite"/>
    </source>
</evidence>
<reference key="1">
    <citation type="journal article" date="2005" name="Nucleic Acids Res.">
        <title>Genome dynamics and diversity of Shigella species, the etiologic agents of bacillary dysentery.</title>
        <authorList>
            <person name="Yang F."/>
            <person name="Yang J."/>
            <person name="Zhang X."/>
            <person name="Chen L."/>
            <person name="Jiang Y."/>
            <person name="Yan Y."/>
            <person name="Tang X."/>
            <person name="Wang J."/>
            <person name="Xiong Z."/>
            <person name="Dong J."/>
            <person name="Xue Y."/>
            <person name="Zhu Y."/>
            <person name="Xu X."/>
            <person name="Sun L."/>
            <person name="Chen S."/>
            <person name="Nie H."/>
            <person name="Peng J."/>
            <person name="Xu J."/>
            <person name="Wang Y."/>
            <person name="Yuan Z."/>
            <person name="Wen Y."/>
            <person name="Yao Z."/>
            <person name="Shen Y."/>
            <person name="Qiang B."/>
            <person name="Hou Y."/>
            <person name="Yu J."/>
            <person name="Jin Q."/>
        </authorList>
    </citation>
    <scope>NUCLEOTIDE SEQUENCE [LARGE SCALE GENOMIC DNA]</scope>
    <source>
        <strain>Sd197</strain>
    </source>
</reference>
<name>IHFA_SHIDS</name>
<dbReference type="EMBL" id="CP000034">
    <property type="protein sequence ID" value="ABB61918.1"/>
    <property type="molecule type" value="Genomic_DNA"/>
</dbReference>
<dbReference type="RefSeq" id="WP_001229265.1">
    <property type="nucleotide sequence ID" value="NC_007606.1"/>
</dbReference>
<dbReference type="RefSeq" id="YP_403409.1">
    <property type="nucleotide sequence ID" value="NC_007606.1"/>
</dbReference>
<dbReference type="SMR" id="Q32FI7"/>
<dbReference type="STRING" id="300267.SDY_1807"/>
<dbReference type="EnsemblBacteria" id="ABB61918">
    <property type="protein sequence ID" value="ABB61918"/>
    <property type="gene ID" value="SDY_1807"/>
</dbReference>
<dbReference type="GeneID" id="93775925"/>
<dbReference type="KEGG" id="sdy:SDY_1807"/>
<dbReference type="PATRIC" id="fig|300267.13.peg.2179"/>
<dbReference type="HOGENOM" id="CLU_105066_1_3_6"/>
<dbReference type="Proteomes" id="UP000002716">
    <property type="component" value="Chromosome"/>
</dbReference>
<dbReference type="GO" id="GO:0005829">
    <property type="term" value="C:cytosol"/>
    <property type="evidence" value="ECO:0007669"/>
    <property type="project" value="TreeGrafter"/>
</dbReference>
<dbReference type="GO" id="GO:0003677">
    <property type="term" value="F:DNA binding"/>
    <property type="evidence" value="ECO:0007669"/>
    <property type="project" value="UniProtKB-UniRule"/>
</dbReference>
<dbReference type="GO" id="GO:0030527">
    <property type="term" value="F:structural constituent of chromatin"/>
    <property type="evidence" value="ECO:0007669"/>
    <property type="project" value="InterPro"/>
</dbReference>
<dbReference type="GO" id="GO:0006310">
    <property type="term" value="P:DNA recombination"/>
    <property type="evidence" value="ECO:0007669"/>
    <property type="project" value="UniProtKB-UniRule"/>
</dbReference>
<dbReference type="GO" id="GO:0009893">
    <property type="term" value="P:positive regulation of metabolic process"/>
    <property type="evidence" value="ECO:0007669"/>
    <property type="project" value="UniProtKB-ARBA"/>
</dbReference>
<dbReference type="GO" id="GO:0006355">
    <property type="term" value="P:regulation of DNA-templated transcription"/>
    <property type="evidence" value="ECO:0007669"/>
    <property type="project" value="UniProtKB-UniRule"/>
</dbReference>
<dbReference type="GO" id="GO:0006417">
    <property type="term" value="P:regulation of translation"/>
    <property type="evidence" value="ECO:0007669"/>
    <property type="project" value="UniProtKB-UniRule"/>
</dbReference>
<dbReference type="CDD" id="cd13835">
    <property type="entry name" value="IHF_A"/>
    <property type="match status" value="1"/>
</dbReference>
<dbReference type="FunFam" id="4.10.520.10:FF:000002">
    <property type="entry name" value="Integration host factor subunit alpha"/>
    <property type="match status" value="1"/>
</dbReference>
<dbReference type="Gene3D" id="4.10.520.10">
    <property type="entry name" value="IHF-like DNA-binding proteins"/>
    <property type="match status" value="1"/>
</dbReference>
<dbReference type="HAMAP" id="MF_00380">
    <property type="entry name" value="IHF_alpha"/>
    <property type="match status" value="1"/>
</dbReference>
<dbReference type="InterPro" id="IPR000119">
    <property type="entry name" value="Hist_DNA-bd"/>
</dbReference>
<dbReference type="InterPro" id="IPR020816">
    <property type="entry name" value="Histone-like_DNA-bd_CS"/>
</dbReference>
<dbReference type="InterPro" id="IPR010992">
    <property type="entry name" value="IHF-like_DNA-bd_dom_sf"/>
</dbReference>
<dbReference type="InterPro" id="IPR005684">
    <property type="entry name" value="IHF_alpha"/>
</dbReference>
<dbReference type="NCBIfam" id="TIGR00987">
    <property type="entry name" value="himA"/>
    <property type="match status" value="1"/>
</dbReference>
<dbReference type="NCBIfam" id="NF001401">
    <property type="entry name" value="PRK00285.1"/>
    <property type="match status" value="1"/>
</dbReference>
<dbReference type="PANTHER" id="PTHR33175">
    <property type="entry name" value="DNA-BINDING PROTEIN HU"/>
    <property type="match status" value="1"/>
</dbReference>
<dbReference type="PANTHER" id="PTHR33175:SF2">
    <property type="entry name" value="INTEGRATION HOST FACTOR SUBUNIT ALPHA"/>
    <property type="match status" value="1"/>
</dbReference>
<dbReference type="Pfam" id="PF00216">
    <property type="entry name" value="Bac_DNA_binding"/>
    <property type="match status" value="1"/>
</dbReference>
<dbReference type="PRINTS" id="PR01727">
    <property type="entry name" value="DNABINDINGHU"/>
</dbReference>
<dbReference type="SMART" id="SM00411">
    <property type="entry name" value="BHL"/>
    <property type="match status" value="1"/>
</dbReference>
<dbReference type="SUPFAM" id="SSF47729">
    <property type="entry name" value="IHF-like DNA-binding proteins"/>
    <property type="match status" value="1"/>
</dbReference>
<dbReference type="PROSITE" id="PS00045">
    <property type="entry name" value="HISTONE_LIKE"/>
    <property type="match status" value="1"/>
</dbReference>
<accession>Q32FI7</accession>
<keyword id="KW-0233">DNA recombination</keyword>
<keyword id="KW-0238">DNA-binding</keyword>
<keyword id="KW-1185">Reference proteome</keyword>
<keyword id="KW-0804">Transcription</keyword>
<keyword id="KW-0805">Transcription regulation</keyword>
<keyword id="KW-0810">Translation regulation</keyword>
<feature type="chain" id="PRO_0000277779" description="Integration host factor subunit alpha">
    <location>
        <begin position="1"/>
        <end position="99"/>
    </location>
</feature>
<feature type="region of interest" description="Disordered" evidence="2">
    <location>
        <begin position="49"/>
        <end position="73"/>
    </location>
</feature>
<sequence length="99" mass="11354">MALTKAEMSEYLFDKLGLSKRDAKELVELFFEEIRRALENGEQVKLSGFGNFDLRDKNQRPGRNPKTGEDIPITARRVVTFRPGQKLKSRVENASPKDE</sequence>